<keyword id="KW-0967">Endosome</keyword>
<keyword id="KW-0472">Membrane</keyword>
<keyword id="KW-0653">Protein transport</keyword>
<keyword id="KW-1185">Reference proteome</keyword>
<keyword id="KW-0728">SH3 domain</keyword>
<keyword id="KW-0813">Transport</keyword>
<evidence type="ECO:0000250" key="1"/>
<evidence type="ECO:0000255" key="2">
    <source>
        <dbReference type="PROSITE-ProRule" id="PRU00192"/>
    </source>
</evidence>
<evidence type="ECO:0000255" key="3">
    <source>
        <dbReference type="PROSITE-ProRule" id="PRU00218"/>
    </source>
</evidence>
<evidence type="ECO:0000256" key="4">
    <source>
        <dbReference type="SAM" id="MobiDB-lite"/>
    </source>
</evidence>
<evidence type="ECO:0000305" key="5"/>
<feature type="chain" id="PRO_0000292486" description="Class E vacuolar protein-sorting machinery protein hse1">
    <location>
        <begin position="1"/>
        <end position="599"/>
    </location>
</feature>
<feature type="domain" description="VHS" evidence="3">
    <location>
        <begin position="16"/>
        <end position="145"/>
    </location>
</feature>
<feature type="domain" description="UIM" evidence="5">
    <location>
        <begin position="162"/>
        <end position="181"/>
    </location>
</feature>
<feature type="domain" description="SH3" evidence="2">
    <location>
        <begin position="215"/>
        <end position="274"/>
    </location>
</feature>
<feature type="region of interest" description="Disordered" evidence="4">
    <location>
        <begin position="140"/>
        <end position="163"/>
    </location>
</feature>
<feature type="region of interest" description="Disordered" evidence="4">
    <location>
        <begin position="177"/>
        <end position="212"/>
    </location>
</feature>
<feature type="region of interest" description="Disordered" evidence="4">
    <location>
        <begin position="368"/>
        <end position="599"/>
    </location>
</feature>
<feature type="compositionally biased region" description="Basic and acidic residues" evidence="4">
    <location>
        <begin position="151"/>
        <end position="163"/>
    </location>
</feature>
<feature type="compositionally biased region" description="Low complexity" evidence="4">
    <location>
        <begin position="181"/>
        <end position="210"/>
    </location>
</feature>
<feature type="compositionally biased region" description="Pro residues" evidence="4">
    <location>
        <begin position="381"/>
        <end position="391"/>
    </location>
</feature>
<feature type="compositionally biased region" description="Polar residues" evidence="4">
    <location>
        <begin position="413"/>
        <end position="427"/>
    </location>
</feature>
<feature type="compositionally biased region" description="Low complexity" evidence="4">
    <location>
        <begin position="438"/>
        <end position="454"/>
    </location>
</feature>
<feature type="compositionally biased region" description="Polar residues" evidence="4">
    <location>
        <begin position="462"/>
        <end position="474"/>
    </location>
</feature>
<feature type="compositionally biased region" description="Polar residues" evidence="4">
    <location>
        <begin position="509"/>
        <end position="525"/>
    </location>
</feature>
<feature type="compositionally biased region" description="Low complexity" evidence="4">
    <location>
        <begin position="533"/>
        <end position="550"/>
    </location>
</feature>
<feature type="compositionally biased region" description="Low complexity" evidence="4">
    <location>
        <begin position="580"/>
        <end position="599"/>
    </location>
</feature>
<accession>A1CEK6</accession>
<sequence length="599" mass="66319">MFRAQQNAFDDAVAKATDENLTSENWEYILDVCDKVAAEESGAKDAVAAMIKRLAHRNANVQLYTLELANALAQNCGPKIHRELASRSFTDALLRLANDRNTHQQVKSKILERMHDWTRMFSSNPDFGIMEQAYMKLKTQNPNLQPPSKPVKKEITQADRQKEEEELQMALALSIREKSDAGPAPQAESSAPASAPVSQTQAAAPQAVPSGTSAATVSRVRALFDFQPSEPGELQFRKGDIIAVLESVYKDWWKGSLRGQTGIFPLNYVEKLPDPTVEELQREAQMEADVFGQIKNVEKLLTLLSTRSSELNVQDNEEITALYHSTLAIRPKLIELIGKYSQKKDEFTQLNEKFIKARRDYESLLEASMSHPPQPQYARPGQPPYGYPAPTGPHGYPQGAPQPDPQRYFSPRPQDQTHMYPPTSQSPDPRGRTPPAGPTMQQQQQQPPAESFQPMHHRPESTYDNPQELGTSVYDSPVEYPPANQRFQYPPGASAPPGVHQQLQQQQQEYSPSNYSPEDTTNPPTANFPPQPQQSQLPYPTGPAGHQAPPSHQPPPVPGGASKPSPYPSLTPGAPSAGEYQAYNPSQASASSNPASFYR</sequence>
<name>HSE1_ASPCL</name>
<organism>
    <name type="scientific">Aspergillus clavatus (strain ATCC 1007 / CBS 513.65 / DSM 816 / NCTC 3887 / NRRL 1 / QM 1276 / 107)</name>
    <dbReference type="NCBI Taxonomy" id="344612"/>
    <lineage>
        <taxon>Eukaryota</taxon>
        <taxon>Fungi</taxon>
        <taxon>Dikarya</taxon>
        <taxon>Ascomycota</taxon>
        <taxon>Pezizomycotina</taxon>
        <taxon>Eurotiomycetes</taxon>
        <taxon>Eurotiomycetidae</taxon>
        <taxon>Eurotiales</taxon>
        <taxon>Aspergillaceae</taxon>
        <taxon>Aspergillus</taxon>
        <taxon>Aspergillus subgen. Fumigati</taxon>
    </lineage>
</organism>
<comment type="function">
    <text evidence="1">Component of the ESCRT-0 complex which is the sorting receptor for ubiquitinated cargo proteins at the multivesicular body (MVB).</text>
</comment>
<comment type="subunit">
    <text evidence="1">Component of the ESCRT-0 complex composed of HSE1 and VPS27.</text>
</comment>
<comment type="subcellular location">
    <subcellularLocation>
        <location evidence="1">Endosome membrane</location>
        <topology evidence="1">Peripheral membrane protein</topology>
        <orientation evidence="1">Cytoplasmic side</orientation>
    </subcellularLocation>
</comment>
<comment type="similarity">
    <text evidence="5">Belongs to the STAM family.</text>
</comment>
<gene>
    <name type="primary">hse1</name>
    <name type="ORF">ACLA_089980</name>
</gene>
<dbReference type="EMBL" id="DS027052">
    <property type="protein sequence ID" value="EAW11305.1"/>
    <property type="molecule type" value="Genomic_DNA"/>
</dbReference>
<dbReference type="RefSeq" id="XP_001272731.1">
    <property type="nucleotide sequence ID" value="XM_001272730.1"/>
</dbReference>
<dbReference type="SMR" id="A1CEK6"/>
<dbReference type="STRING" id="344612.A1CEK6"/>
<dbReference type="EnsemblFungi" id="EAW11305">
    <property type="protein sequence ID" value="EAW11305"/>
    <property type="gene ID" value="ACLA_089980"/>
</dbReference>
<dbReference type="GeneID" id="4705069"/>
<dbReference type="KEGG" id="act:ACLA_089980"/>
<dbReference type="VEuPathDB" id="FungiDB:ACLA_089980"/>
<dbReference type="eggNOG" id="KOG2199">
    <property type="taxonomic scope" value="Eukaryota"/>
</dbReference>
<dbReference type="HOGENOM" id="CLU_010104_1_1_1"/>
<dbReference type="OMA" id="QVYRDWW"/>
<dbReference type="OrthoDB" id="10255964at2759"/>
<dbReference type="Proteomes" id="UP000006701">
    <property type="component" value="Unassembled WGS sequence"/>
</dbReference>
<dbReference type="GO" id="GO:0010008">
    <property type="term" value="C:endosome membrane"/>
    <property type="evidence" value="ECO:0007669"/>
    <property type="project" value="UniProtKB-SubCell"/>
</dbReference>
<dbReference type="GO" id="GO:0033565">
    <property type="term" value="C:ESCRT-0 complex"/>
    <property type="evidence" value="ECO:0007669"/>
    <property type="project" value="TreeGrafter"/>
</dbReference>
<dbReference type="GO" id="GO:0035091">
    <property type="term" value="F:phosphatidylinositol binding"/>
    <property type="evidence" value="ECO:0007669"/>
    <property type="project" value="InterPro"/>
</dbReference>
<dbReference type="GO" id="GO:0043130">
    <property type="term" value="F:ubiquitin binding"/>
    <property type="evidence" value="ECO:0007669"/>
    <property type="project" value="InterPro"/>
</dbReference>
<dbReference type="GO" id="GO:0043328">
    <property type="term" value="P:protein transport to vacuole involved in ubiquitin-dependent protein catabolic process via the multivesicular body sorting pathway"/>
    <property type="evidence" value="ECO:0007669"/>
    <property type="project" value="TreeGrafter"/>
</dbReference>
<dbReference type="CDD" id="cd21386">
    <property type="entry name" value="GAT_Hse1"/>
    <property type="match status" value="1"/>
</dbReference>
<dbReference type="CDD" id="cd11805">
    <property type="entry name" value="SH3_GRB2_like_C"/>
    <property type="match status" value="1"/>
</dbReference>
<dbReference type="CDD" id="cd16978">
    <property type="entry name" value="VHS_HSE1"/>
    <property type="match status" value="1"/>
</dbReference>
<dbReference type="FunFam" id="2.30.30.40:FF:000072">
    <property type="entry name" value="Unconventional Myosin IB"/>
    <property type="match status" value="1"/>
</dbReference>
<dbReference type="Gene3D" id="1.20.5.1940">
    <property type="match status" value="1"/>
</dbReference>
<dbReference type="Gene3D" id="1.25.40.90">
    <property type="match status" value="1"/>
</dbReference>
<dbReference type="Gene3D" id="2.30.30.40">
    <property type="entry name" value="SH3 Domains"/>
    <property type="match status" value="1"/>
</dbReference>
<dbReference type="InterPro" id="IPR008942">
    <property type="entry name" value="ENTH_VHS"/>
</dbReference>
<dbReference type="InterPro" id="IPR004152">
    <property type="entry name" value="GAT_dom"/>
</dbReference>
<dbReference type="InterPro" id="IPR036028">
    <property type="entry name" value="SH3-like_dom_sf"/>
</dbReference>
<dbReference type="InterPro" id="IPR001452">
    <property type="entry name" value="SH3_domain"/>
</dbReference>
<dbReference type="InterPro" id="IPR050670">
    <property type="entry name" value="STAM"/>
</dbReference>
<dbReference type="InterPro" id="IPR002014">
    <property type="entry name" value="VHS_dom"/>
</dbReference>
<dbReference type="PANTHER" id="PTHR45929">
    <property type="entry name" value="JAK PATHWAY SIGNAL TRANSDUCTION ADAPTOR MOLECULE"/>
    <property type="match status" value="1"/>
</dbReference>
<dbReference type="PANTHER" id="PTHR45929:SF3">
    <property type="entry name" value="JAK PATHWAY SIGNAL TRANSDUCTION ADAPTOR MOLECULE"/>
    <property type="match status" value="1"/>
</dbReference>
<dbReference type="Pfam" id="PF03127">
    <property type="entry name" value="GAT"/>
    <property type="match status" value="1"/>
</dbReference>
<dbReference type="Pfam" id="PF00018">
    <property type="entry name" value="SH3_1"/>
    <property type="match status" value="1"/>
</dbReference>
<dbReference type="Pfam" id="PF00790">
    <property type="entry name" value="VHS"/>
    <property type="match status" value="1"/>
</dbReference>
<dbReference type="PRINTS" id="PR00452">
    <property type="entry name" value="SH3DOMAIN"/>
</dbReference>
<dbReference type="PRINTS" id="PR01887">
    <property type="entry name" value="SPECTRNALPHA"/>
</dbReference>
<dbReference type="SMART" id="SM00326">
    <property type="entry name" value="SH3"/>
    <property type="match status" value="1"/>
</dbReference>
<dbReference type="SMART" id="SM00288">
    <property type="entry name" value="VHS"/>
    <property type="match status" value="1"/>
</dbReference>
<dbReference type="SUPFAM" id="SSF48464">
    <property type="entry name" value="ENTH/VHS domain"/>
    <property type="match status" value="1"/>
</dbReference>
<dbReference type="SUPFAM" id="SSF50044">
    <property type="entry name" value="SH3-domain"/>
    <property type="match status" value="1"/>
</dbReference>
<dbReference type="PROSITE" id="PS50002">
    <property type="entry name" value="SH3"/>
    <property type="match status" value="1"/>
</dbReference>
<dbReference type="PROSITE" id="PS50179">
    <property type="entry name" value="VHS"/>
    <property type="match status" value="1"/>
</dbReference>
<protein>
    <recommendedName>
        <fullName>Class E vacuolar protein-sorting machinery protein hse1</fullName>
    </recommendedName>
</protein>
<proteinExistence type="inferred from homology"/>
<reference key="1">
    <citation type="journal article" date="2008" name="PLoS Genet.">
        <title>Genomic islands in the pathogenic filamentous fungus Aspergillus fumigatus.</title>
        <authorList>
            <person name="Fedorova N.D."/>
            <person name="Khaldi N."/>
            <person name="Joardar V.S."/>
            <person name="Maiti R."/>
            <person name="Amedeo P."/>
            <person name="Anderson M.J."/>
            <person name="Crabtree J."/>
            <person name="Silva J.C."/>
            <person name="Badger J.H."/>
            <person name="Albarraq A."/>
            <person name="Angiuoli S."/>
            <person name="Bussey H."/>
            <person name="Bowyer P."/>
            <person name="Cotty P.J."/>
            <person name="Dyer P.S."/>
            <person name="Egan A."/>
            <person name="Galens K."/>
            <person name="Fraser-Liggett C.M."/>
            <person name="Haas B.J."/>
            <person name="Inman J.M."/>
            <person name="Kent R."/>
            <person name="Lemieux S."/>
            <person name="Malavazi I."/>
            <person name="Orvis J."/>
            <person name="Roemer T."/>
            <person name="Ronning C.M."/>
            <person name="Sundaram J.P."/>
            <person name="Sutton G."/>
            <person name="Turner G."/>
            <person name="Venter J.C."/>
            <person name="White O.R."/>
            <person name="Whitty B.R."/>
            <person name="Youngman P."/>
            <person name="Wolfe K.H."/>
            <person name="Goldman G.H."/>
            <person name="Wortman J.R."/>
            <person name="Jiang B."/>
            <person name="Denning D.W."/>
            <person name="Nierman W.C."/>
        </authorList>
    </citation>
    <scope>NUCLEOTIDE SEQUENCE [LARGE SCALE GENOMIC DNA]</scope>
    <source>
        <strain>ATCC 1007 / CBS 513.65 / DSM 816 / NCTC 3887 / NRRL 1 / QM 1276 / 107</strain>
    </source>
</reference>